<gene>
    <name evidence="1" type="primary">infA</name>
    <name type="ordered locus">SAK_0113</name>
</gene>
<sequence length="72" mass="8273">MAKEDVIEIEGKVVETMPNAMFTVELENGHQILATVSGKIRKNYIRILVGDRVTVEMSPYDLTRGRITYRFK</sequence>
<dbReference type="EMBL" id="CP000114">
    <property type="protein sequence ID" value="ABA46261.1"/>
    <property type="molecule type" value="Genomic_DNA"/>
</dbReference>
<dbReference type="RefSeq" id="WP_001040189.1">
    <property type="nucleotide sequence ID" value="NC_007432.1"/>
</dbReference>
<dbReference type="SMR" id="Q3K3U7"/>
<dbReference type="GeneID" id="98392414"/>
<dbReference type="KEGG" id="sak:SAK_0113"/>
<dbReference type="HOGENOM" id="CLU_151267_1_0_9"/>
<dbReference type="GO" id="GO:0005829">
    <property type="term" value="C:cytosol"/>
    <property type="evidence" value="ECO:0007669"/>
    <property type="project" value="TreeGrafter"/>
</dbReference>
<dbReference type="GO" id="GO:0043022">
    <property type="term" value="F:ribosome binding"/>
    <property type="evidence" value="ECO:0007669"/>
    <property type="project" value="UniProtKB-UniRule"/>
</dbReference>
<dbReference type="GO" id="GO:0019843">
    <property type="term" value="F:rRNA binding"/>
    <property type="evidence" value="ECO:0007669"/>
    <property type="project" value="UniProtKB-UniRule"/>
</dbReference>
<dbReference type="GO" id="GO:0003743">
    <property type="term" value="F:translation initiation factor activity"/>
    <property type="evidence" value="ECO:0007669"/>
    <property type="project" value="UniProtKB-UniRule"/>
</dbReference>
<dbReference type="CDD" id="cd04451">
    <property type="entry name" value="S1_IF1"/>
    <property type="match status" value="1"/>
</dbReference>
<dbReference type="FunFam" id="2.40.50.140:FF:000002">
    <property type="entry name" value="Translation initiation factor IF-1"/>
    <property type="match status" value="1"/>
</dbReference>
<dbReference type="Gene3D" id="2.40.50.140">
    <property type="entry name" value="Nucleic acid-binding proteins"/>
    <property type="match status" value="1"/>
</dbReference>
<dbReference type="HAMAP" id="MF_00075">
    <property type="entry name" value="IF_1"/>
    <property type="match status" value="1"/>
</dbReference>
<dbReference type="InterPro" id="IPR012340">
    <property type="entry name" value="NA-bd_OB-fold"/>
</dbReference>
<dbReference type="InterPro" id="IPR006196">
    <property type="entry name" value="RNA-binding_domain_S1_IF1"/>
</dbReference>
<dbReference type="InterPro" id="IPR003029">
    <property type="entry name" value="S1_domain"/>
</dbReference>
<dbReference type="InterPro" id="IPR004368">
    <property type="entry name" value="TIF_IF1"/>
</dbReference>
<dbReference type="NCBIfam" id="TIGR00008">
    <property type="entry name" value="infA"/>
    <property type="match status" value="1"/>
</dbReference>
<dbReference type="PANTHER" id="PTHR33370">
    <property type="entry name" value="TRANSLATION INITIATION FACTOR IF-1, CHLOROPLASTIC"/>
    <property type="match status" value="1"/>
</dbReference>
<dbReference type="PANTHER" id="PTHR33370:SF1">
    <property type="entry name" value="TRANSLATION INITIATION FACTOR IF-1, CHLOROPLASTIC"/>
    <property type="match status" value="1"/>
</dbReference>
<dbReference type="Pfam" id="PF01176">
    <property type="entry name" value="eIF-1a"/>
    <property type="match status" value="1"/>
</dbReference>
<dbReference type="SMART" id="SM00316">
    <property type="entry name" value="S1"/>
    <property type="match status" value="1"/>
</dbReference>
<dbReference type="SUPFAM" id="SSF50249">
    <property type="entry name" value="Nucleic acid-binding proteins"/>
    <property type="match status" value="1"/>
</dbReference>
<dbReference type="PROSITE" id="PS50832">
    <property type="entry name" value="S1_IF1_TYPE"/>
    <property type="match status" value="1"/>
</dbReference>
<accession>Q3K3U7</accession>
<proteinExistence type="inferred from homology"/>
<feature type="chain" id="PRO_0000263881" description="Translation initiation factor IF-1">
    <location>
        <begin position="1"/>
        <end position="72"/>
    </location>
</feature>
<feature type="domain" description="S1-like" evidence="1">
    <location>
        <begin position="1"/>
        <end position="72"/>
    </location>
</feature>
<name>IF1_STRA1</name>
<reference key="1">
    <citation type="journal article" date="2005" name="Proc. Natl. Acad. Sci. U.S.A.">
        <title>Genome analysis of multiple pathogenic isolates of Streptococcus agalactiae: implications for the microbial 'pan-genome'.</title>
        <authorList>
            <person name="Tettelin H."/>
            <person name="Masignani V."/>
            <person name="Cieslewicz M.J."/>
            <person name="Donati C."/>
            <person name="Medini D."/>
            <person name="Ward N.L."/>
            <person name="Angiuoli S.V."/>
            <person name="Crabtree J."/>
            <person name="Jones A.L."/>
            <person name="Durkin A.S."/>
            <person name="DeBoy R.T."/>
            <person name="Davidsen T.M."/>
            <person name="Mora M."/>
            <person name="Scarselli M."/>
            <person name="Margarit y Ros I."/>
            <person name="Peterson J.D."/>
            <person name="Hauser C.R."/>
            <person name="Sundaram J.P."/>
            <person name="Nelson W.C."/>
            <person name="Madupu R."/>
            <person name="Brinkac L.M."/>
            <person name="Dodson R.J."/>
            <person name="Rosovitz M.J."/>
            <person name="Sullivan S.A."/>
            <person name="Daugherty S.C."/>
            <person name="Haft D.H."/>
            <person name="Selengut J."/>
            <person name="Gwinn M.L."/>
            <person name="Zhou L."/>
            <person name="Zafar N."/>
            <person name="Khouri H."/>
            <person name="Radune D."/>
            <person name="Dimitrov G."/>
            <person name="Watkins K."/>
            <person name="O'Connor K.J."/>
            <person name="Smith S."/>
            <person name="Utterback T.R."/>
            <person name="White O."/>
            <person name="Rubens C.E."/>
            <person name="Grandi G."/>
            <person name="Madoff L.C."/>
            <person name="Kasper D.L."/>
            <person name="Telford J.L."/>
            <person name="Wessels M.R."/>
            <person name="Rappuoli R."/>
            <person name="Fraser C.M."/>
        </authorList>
    </citation>
    <scope>NUCLEOTIDE SEQUENCE [LARGE SCALE GENOMIC DNA]</scope>
    <source>
        <strain>ATCC 27591 / A909 / CDC SS700</strain>
    </source>
</reference>
<organism>
    <name type="scientific">Streptococcus agalactiae serotype Ia (strain ATCC 27591 / A909 / CDC SS700)</name>
    <dbReference type="NCBI Taxonomy" id="205921"/>
    <lineage>
        <taxon>Bacteria</taxon>
        <taxon>Bacillati</taxon>
        <taxon>Bacillota</taxon>
        <taxon>Bacilli</taxon>
        <taxon>Lactobacillales</taxon>
        <taxon>Streptococcaceae</taxon>
        <taxon>Streptococcus</taxon>
    </lineage>
</organism>
<protein>
    <recommendedName>
        <fullName evidence="1">Translation initiation factor IF-1</fullName>
    </recommendedName>
</protein>
<comment type="function">
    <text evidence="1">One of the essential components for the initiation of protein synthesis. Stabilizes the binding of IF-2 and IF-3 on the 30S subunit to which N-formylmethionyl-tRNA(fMet) subsequently binds. Helps modulate mRNA selection, yielding the 30S pre-initiation complex (PIC). Upon addition of the 50S ribosomal subunit IF-1, IF-2 and IF-3 are released leaving the mature 70S translation initiation complex.</text>
</comment>
<comment type="subunit">
    <text evidence="1">Component of the 30S ribosomal translation pre-initiation complex which assembles on the 30S ribosome in the order IF-2 and IF-3, IF-1 and N-formylmethionyl-tRNA(fMet); mRNA recruitment can occur at any time during PIC assembly.</text>
</comment>
<comment type="subcellular location">
    <subcellularLocation>
        <location evidence="1">Cytoplasm</location>
    </subcellularLocation>
</comment>
<comment type="similarity">
    <text evidence="1">Belongs to the IF-1 family.</text>
</comment>
<keyword id="KW-0963">Cytoplasm</keyword>
<keyword id="KW-0396">Initiation factor</keyword>
<keyword id="KW-0648">Protein biosynthesis</keyword>
<keyword id="KW-0694">RNA-binding</keyword>
<keyword id="KW-0699">rRNA-binding</keyword>
<evidence type="ECO:0000255" key="1">
    <source>
        <dbReference type="HAMAP-Rule" id="MF_00075"/>
    </source>
</evidence>